<comment type="catalytic activity">
    <reaction evidence="1">
        <text>(4aS,6R)-4a-hydroxy-L-erythro-5,6,7,8-tetrahydrobiopterin = (6R)-L-erythro-6,7-dihydrobiopterin + H2O</text>
        <dbReference type="Rhea" id="RHEA:11920"/>
        <dbReference type="ChEBI" id="CHEBI:15377"/>
        <dbReference type="ChEBI" id="CHEBI:15642"/>
        <dbReference type="ChEBI" id="CHEBI:43120"/>
        <dbReference type="EC" id="4.2.1.96"/>
    </reaction>
</comment>
<comment type="similarity">
    <text evidence="1">Belongs to the pterin-4-alpha-carbinolamine dehydratase family.</text>
</comment>
<name>PHS_RHIEC</name>
<organism>
    <name type="scientific">Rhizobium etli (strain ATCC 51251 / DSM 11541 / JCM 21823 / NBRC 15573 / CFN 42)</name>
    <dbReference type="NCBI Taxonomy" id="347834"/>
    <lineage>
        <taxon>Bacteria</taxon>
        <taxon>Pseudomonadati</taxon>
        <taxon>Pseudomonadota</taxon>
        <taxon>Alphaproteobacteria</taxon>
        <taxon>Hyphomicrobiales</taxon>
        <taxon>Rhizobiaceae</taxon>
        <taxon>Rhizobium/Agrobacterium group</taxon>
        <taxon>Rhizobium</taxon>
    </lineage>
</organism>
<reference key="1">
    <citation type="journal article" date="2006" name="Proc. Natl. Acad. Sci. U.S.A.">
        <title>The partitioned Rhizobium etli genome: genetic and metabolic redundancy in seven interacting replicons.</title>
        <authorList>
            <person name="Gonzalez V."/>
            <person name="Santamaria R.I."/>
            <person name="Bustos P."/>
            <person name="Hernandez-Gonzalez I."/>
            <person name="Medrano-Soto A."/>
            <person name="Moreno-Hagelsieb G."/>
            <person name="Janga S.C."/>
            <person name="Ramirez M.A."/>
            <person name="Jimenez-Jacinto V."/>
            <person name="Collado-Vides J."/>
            <person name="Davila G."/>
        </authorList>
    </citation>
    <scope>NUCLEOTIDE SEQUENCE [LARGE SCALE GENOMIC DNA]</scope>
    <source>
        <strain>ATCC 51251 / DSM 11541 / JCM 21823 / NBRC 15573 / CFN 42</strain>
    </source>
</reference>
<accession>Q2K3A7</accession>
<sequence length="101" mass="11262">MKSERLERTAVEAELAGLAGWALNDAASSISKTFKFSNFIEAFGFMTEAAITAEKLNHHPEWFNVYSRVDVTLNTHDAGGLTELDFKLARAMEKAAARRLR</sequence>
<evidence type="ECO:0000255" key="1">
    <source>
        <dbReference type="HAMAP-Rule" id="MF_00434"/>
    </source>
</evidence>
<gene>
    <name type="ordered locus">RHE_CH03934</name>
</gene>
<feature type="chain" id="PRO_1000050441" description="Putative pterin-4-alpha-carbinolamine dehydratase">
    <location>
        <begin position="1"/>
        <end position="101"/>
    </location>
</feature>
<proteinExistence type="inferred from homology"/>
<dbReference type="EC" id="4.2.1.96" evidence="1"/>
<dbReference type="EMBL" id="CP000133">
    <property type="protein sequence ID" value="ABC92679.1"/>
    <property type="molecule type" value="Genomic_DNA"/>
</dbReference>
<dbReference type="RefSeq" id="WP_011427125.1">
    <property type="nucleotide sequence ID" value="NC_007761.1"/>
</dbReference>
<dbReference type="SMR" id="Q2K3A7"/>
<dbReference type="KEGG" id="ret:RHE_CH03934"/>
<dbReference type="eggNOG" id="COG2154">
    <property type="taxonomic scope" value="Bacteria"/>
</dbReference>
<dbReference type="HOGENOM" id="CLU_081974_3_2_5"/>
<dbReference type="OrthoDB" id="9794987at2"/>
<dbReference type="Proteomes" id="UP000001936">
    <property type="component" value="Chromosome"/>
</dbReference>
<dbReference type="GO" id="GO:0008124">
    <property type="term" value="F:4-alpha-hydroxytetrahydrobiopterin dehydratase activity"/>
    <property type="evidence" value="ECO:0007669"/>
    <property type="project" value="UniProtKB-UniRule"/>
</dbReference>
<dbReference type="GO" id="GO:0006729">
    <property type="term" value="P:tetrahydrobiopterin biosynthetic process"/>
    <property type="evidence" value="ECO:0007669"/>
    <property type="project" value="InterPro"/>
</dbReference>
<dbReference type="CDD" id="cd00914">
    <property type="entry name" value="PCD_DCoH_subfamily_b"/>
    <property type="match status" value="1"/>
</dbReference>
<dbReference type="Gene3D" id="3.30.1360.20">
    <property type="entry name" value="Transcriptional coactivator/pterin dehydratase"/>
    <property type="match status" value="1"/>
</dbReference>
<dbReference type="HAMAP" id="MF_00434">
    <property type="entry name" value="Pterin_4_alpha"/>
    <property type="match status" value="1"/>
</dbReference>
<dbReference type="InterPro" id="IPR036428">
    <property type="entry name" value="PCD_sf"/>
</dbReference>
<dbReference type="InterPro" id="IPR001533">
    <property type="entry name" value="Pterin_deHydtase"/>
</dbReference>
<dbReference type="NCBIfam" id="NF002017">
    <property type="entry name" value="PRK00823.1-2"/>
    <property type="match status" value="1"/>
</dbReference>
<dbReference type="NCBIfam" id="NF002018">
    <property type="entry name" value="PRK00823.1-3"/>
    <property type="match status" value="1"/>
</dbReference>
<dbReference type="PANTHER" id="PTHR12599">
    <property type="entry name" value="PTERIN-4-ALPHA-CARBINOLAMINE DEHYDRATASE"/>
    <property type="match status" value="1"/>
</dbReference>
<dbReference type="PANTHER" id="PTHR12599:SF0">
    <property type="entry name" value="PTERIN-4-ALPHA-CARBINOLAMINE DEHYDRATASE"/>
    <property type="match status" value="1"/>
</dbReference>
<dbReference type="Pfam" id="PF01329">
    <property type="entry name" value="Pterin_4a"/>
    <property type="match status" value="1"/>
</dbReference>
<dbReference type="SUPFAM" id="SSF55248">
    <property type="entry name" value="PCD-like"/>
    <property type="match status" value="1"/>
</dbReference>
<protein>
    <recommendedName>
        <fullName evidence="1">Putative pterin-4-alpha-carbinolamine dehydratase</fullName>
        <shortName evidence="1">PHS</shortName>
        <ecNumber evidence="1">4.2.1.96</ecNumber>
    </recommendedName>
    <alternativeName>
        <fullName evidence="1">4-alpha-hydroxy-tetrahydropterin dehydratase</fullName>
    </alternativeName>
    <alternativeName>
        <fullName evidence="1">Pterin carbinolamine dehydratase</fullName>
        <shortName evidence="1">PCD</shortName>
    </alternativeName>
</protein>
<keyword id="KW-0456">Lyase</keyword>
<keyword id="KW-1185">Reference proteome</keyword>